<protein>
    <recommendedName>
        <fullName evidence="1">Dihydroorotate dehydrogenase B (NAD(+)), electron transfer subunit</fullName>
    </recommendedName>
    <alternativeName>
        <fullName evidence="1">Dihydroorotate oxidase B, electron transfer subunit</fullName>
    </alternativeName>
</protein>
<dbReference type="EMBL" id="CP000560">
    <property type="protein sequence ID" value="ABS73899.1"/>
    <property type="molecule type" value="Genomic_DNA"/>
</dbReference>
<dbReference type="RefSeq" id="WP_012117518.1">
    <property type="nucleotide sequence ID" value="NC_009725.2"/>
</dbReference>
<dbReference type="SMR" id="A7Z4H3"/>
<dbReference type="GeneID" id="93080669"/>
<dbReference type="KEGG" id="bay:RBAM_015360"/>
<dbReference type="HOGENOM" id="CLU_003827_1_2_9"/>
<dbReference type="UniPathway" id="UPA00070">
    <property type="reaction ID" value="UER00945"/>
</dbReference>
<dbReference type="Proteomes" id="UP000001120">
    <property type="component" value="Chromosome"/>
</dbReference>
<dbReference type="GO" id="GO:0051537">
    <property type="term" value="F:2 iron, 2 sulfur cluster binding"/>
    <property type="evidence" value="ECO:0007669"/>
    <property type="project" value="UniProtKB-KW"/>
</dbReference>
<dbReference type="GO" id="GO:0009055">
    <property type="term" value="F:electron transfer activity"/>
    <property type="evidence" value="ECO:0007669"/>
    <property type="project" value="UniProtKB-UniRule"/>
</dbReference>
<dbReference type="GO" id="GO:0050660">
    <property type="term" value="F:flavin adenine dinucleotide binding"/>
    <property type="evidence" value="ECO:0007669"/>
    <property type="project" value="InterPro"/>
</dbReference>
<dbReference type="GO" id="GO:0046872">
    <property type="term" value="F:metal ion binding"/>
    <property type="evidence" value="ECO:0007669"/>
    <property type="project" value="UniProtKB-KW"/>
</dbReference>
<dbReference type="GO" id="GO:0016491">
    <property type="term" value="F:oxidoreductase activity"/>
    <property type="evidence" value="ECO:0007669"/>
    <property type="project" value="InterPro"/>
</dbReference>
<dbReference type="GO" id="GO:0044205">
    <property type="term" value="P:'de novo' UMP biosynthetic process"/>
    <property type="evidence" value="ECO:0007669"/>
    <property type="project" value="UniProtKB-UniRule"/>
</dbReference>
<dbReference type="CDD" id="cd06218">
    <property type="entry name" value="DHOD_e_trans"/>
    <property type="match status" value="1"/>
</dbReference>
<dbReference type="FunFam" id="3.40.50.80:FF:000017">
    <property type="entry name" value="Dihydroorotate dehydrogenase B (NAD(+)), electron transfer subunit"/>
    <property type="match status" value="1"/>
</dbReference>
<dbReference type="Gene3D" id="2.10.240.10">
    <property type="entry name" value="Dihydroorotate dehydrogenase, electron transfer subunit"/>
    <property type="match status" value="1"/>
</dbReference>
<dbReference type="Gene3D" id="3.40.50.80">
    <property type="entry name" value="Nucleotide-binding domain of ferredoxin-NADP reductase (FNR) module"/>
    <property type="match status" value="1"/>
</dbReference>
<dbReference type="Gene3D" id="2.40.30.10">
    <property type="entry name" value="Translation factors"/>
    <property type="match status" value="1"/>
</dbReference>
<dbReference type="HAMAP" id="MF_01211">
    <property type="entry name" value="DHODB_Fe_S_bind"/>
    <property type="match status" value="1"/>
</dbReference>
<dbReference type="InterPro" id="IPR012165">
    <property type="entry name" value="Cyt_c3_hydrogenase_gsu"/>
</dbReference>
<dbReference type="InterPro" id="IPR037117">
    <property type="entry name" value="Dihydroorotate_DH_ele_sf"/>
</dbReference>
<dbReference type="InterPro" id="IPR019480">
    <property type="entry name" value="Dihydroorotate_DH_Fe-S-bd"/>
</dbReference>
<dbReference type="InterPro" id="IPR023455">
    <property type="entry name" value="Dihydroorotate_DHASE_ETsu"/>
</dbReference>
<dbReference type="InterPro" id="IPR017927">
    <property type="entry name" value="FAD-bd_FR_type"/>
</dbReference>
<dbReference type="InterPro" id="IPR039261">
    <property type="entry name" value="FNR_nucleotide-bd"/>
</dbReference>
<dbReference type="InterPro" id="IPR001433">
    <property type="entry name" value="OxRdtase_FAD/NAD-bd"/>
</dbReference>
<dbReference type="InterPro" id="IPR050353">
    <property type="entry name" value="PyrK_electron_transfer"/>
</dbReference>
<dbReference type="InterPro" id="IPR017938">
    <property type="entry name" value="Riboflavin_synthase-like_b-brl"/>
</dbReference>
<dbReference type="NCBIfam" id="NF000797">
    <property type="entry name" value="PRK00054.1-2"/>
    <property type="match status" value="1"/>
</dbReference>
<dbReference type="NCBIfam" id="NF000799">
    <property type="entry name" value="PRK00054.1-4"/>
    <property type="match status" value="1"/>
</dbReference>
<dbReference type="PANTHER" id="PTHR43513">
    <property type="entry name" value="DIHYDROOROTATE DEHYDROGENASE B (NAD(+)), ELECTRON TRANSFER SUBUNIT"/>
    <property type="match status" value="1"/>
</dbReference>
<dbReference type="PANTHER" id="PTHR43513:SF3">
    <property type="entry name" value="DIHYDROOROTATE DEHYDROGENASE B (NAD(+)), ELECTRON TRANSFER SUBUNIT-RELATED"/>
    <property type="match status" value="1"/>
</dbReference>
<dbReference type="Pfam" id="PF10418">
    <property type="entry name" value="DHODB_Fe-S_bind"/>
    <property type="match status" value="1"/>
</dbReference>
<dbReference type="Pfam" id="PF00175">
    <property type="entry name" value="NAD_binding_1"/>
    <property type="match status" value="1"/>
</dbReference>
<dbReference type="PIRSF" id="PIRSF006816">
    <property type="entry name" value="Cyc3_hyd_g"/>
    <property type="match status" value="1"/>
</dbReference>
<dbReference type="SUPFAM" id="SSF52343">
    <property type="entry name" value="Ferredoxin reductase-like, C-terminal NADP-linked domain"/>
    <property type="match status" value="1"/>
</dbReference>
<dbReference type="SUPFAM" id="SSF63380">
    <property type="entry name" value="Riboflavin synthase domain-like"/>
    <property type="match status" value="1"/>
</dbReference>
<dbReference type="PROSITE" id="PS51384">
    <property type="entry name" value="FAD_FR"/>
    <property type="match status" value="1"/>
</dbReference>
<organism>
    <name type="scientific">Bacillus velezensis (strain DSM 23117 / BGSC 10A6 / LMG 26770 / FZB42)</name>
    <name type="common">Bacillus amyloliquefaciens subsp. plantarum</name>
    <dbReference type="NCBI Taxonomy" id="326423"/>
    <lineage>
        <taxon>Bacteria</taxon>
        <taxon>Bacillati</taxon>
        <taxon>Bacillota</taxon>
        <taxon>Bacilli</taxon>
        <taxon>Bacillales</taxon>
        <taxon>Bacillaceae</taxon>
        <taxon>Bacillus</taxon>
        <taxon>Bacillus amyloliquefaciens group</taxon>
    </lineage>
</organism>
<name>PYRK_BACVZ</name>
<evidence type="ECO:0000255" key="1">
    <source>
        <dbReference type="HAMAP-Rule" id="MF_01211"/>
    </source>
</evidence>
<comment type="function">
    <text evidence="1">Responsible for channeling the electrons from the oxidation of dihydroorotate from the FMN redox center in the PyrD type B subunit to the ultimate electron acceptor NAD(+).</text>
</comment>
<comment type="cofactor">
    <cofactor evidence="1">
        <name>[2Fe-2S] cluster</name>
        <dbReference type="ChEBI" id="CHEBI:190135"/>
    </cofactor>
    <text evidence="1">Binds 1 [2Fe-2S] cluster per subunit.</text>
</comment>
<comment type="cofactor">
    <cofactor evidence="1">
        <name>FAD</name>
        <dbReference type="ChEBI" id="CHEBI:57692"/>
    </cofactor>
    <text evidence="1">Binds 1 FAD per subunit.</text>
</comment>
<comment type="pathway">
    <text evidence="1">Pyrimidine metabolism; UMP biosynthesis via de novo pathway; orotate from (S)-dihydroorotate (NAD(+) route): step 1/1.</text>
</comment>
<comment type="subunit">
    <text evidence="1">Heterotetramer of 2 PyrK and 2 PyrD type B subunits.</text>
</comment>
<comment type="similarity">
    <text evidence="1">Belongs to the PyrK family.</text>
</comment>
<sequence>MKKAHLTVQSNSEIADRIYKMVLKGELVRHLTEPGQFLHLKVSDAVTPLLRRPLSIADVNFAADEVSVIYRADGEGTRLLAGKKEGGRIDVLGPLGNGFPVRRIEPGKTALLVGGGVGVPPLQELSKRLTEKGVNVIHVLGFQSAKDVFYEQECRAYGDTYVATADGTYGEKGFVTDVIREKQLEFDVLLSCGPTPMLKALKQQYGHKEVYLSMEERMGCGIGACFACVCRTGESDTSYVKVCLDGPVFKAEEVAL</sequence>
<proteinExistence type="inferred from homology"/>
<gene>
    <name evidence="1" type="primary">pyrK</name>
    <name type="ordered locus">RBAM_015360</name>
</gene>
<accession>A7Z4H3</accession>
<reference key="1">
    <citation type="journal article" date="2007" name="Nat. Biotechnol.">
        <title>Comparative analysis of the complete genome sequence of the plant growth-promoting bacterium Bacillus amyloliquefaciens FZB42.</title>
        <authorList>
            <person name="Chen X.H."/>
            <person name="Koumoutsi A."/>
            <person name="Scholz R."/>
            <person name="Eisenreich A."/>
            <person name="Schneider K."/>
            <person name="Heinemeyer I."/>
            <person name="Morgenstern B."/>
            <person name="Voss B."/>
            <person name="Hess W.R."/>
            <person name="Reva O."/>
            <person name="Junge H."/>
            <person name="Voigt B."/>
            <person name="Jungblut P.R."/>
            <person name="Vater J."/>
            <person name="Suessmuth R."/>
            <person name="Liesegang H."/>
            <person name="Strittmatter A."/>
            <person name="Gottschalk G."/>
            <person name="Borriss R."/>
        </authorList>
    </citation>
    <scope>NUCLEOTIDE SEQUENCE [LARGE SCALE GENOMIC DNA]</scope>
    <source>
        <strain>DSM 23117 / BGSC 10A6 / LMG 26770 / FZB42</strain>
    </source>
</reference>
<keyword id="KW-0001">2Fe-2S</keyword>
<keyword id="KW-0249">Electron transport</keyword>
<keyword id="KW-0274">FAD</keyword>
<keyword id="KW-0285">Flavoprotein</keyword>
<keyword id="KW-0408">Iron</keyword>
<keyword id="KW-0411">Iron-sulfur</keyword>
<keyword id="KW-0479">Metal-binding</keyword>
<keyword id="KW-0665">Pyrimidine biosynthesis</keyword>
<keyword id="KW-0813">Transport</keyword>
<feature type="chain" id="PRO_1000066394" description="Dihydroorotate dehydrogenase B (NAD(+)), electron transfer subunit">
    <location>
        <begin position="1"/>
        <end position="256"/>
    </location>
</feature>
<feature type="domain" description="FAD-binding FR-type" evidence="1">
    <location>
        <begin position="1"/>
        <end position="101"/>
    </location>
</feature>
<feature type="binding site" evidence="1">
    <location>
        <begin position="52"/>
        <end position="55"/>
    </location>
    <ligand>
        <name>FAD</name>
        <dbReference type="ChEBI" id="CHEBI:57692"/>
    </ligand>
</feature>
<feature type="binding site" evidence="1">
    <location>
        <begin position="69"/>
        <end position="71"/>
    </location>
    <ligand>
        <name>FAD</name>
        <dbReference type="ChEBI" id="CHEBI:57692"/>
    </ligand>
</feature>
<feature type="binding site" evidence="1">
    <location>
        <begin position="76"/>
        <end position="77"/>
    </location>
    <ligand>
        <name>FAD</name>
        <dbReference type="ChEBI" id="CHEBI:57692"/>
    </ligand>
</feature>
<feature type="binding site" evidence="1">
    <location>
        <position position="220"/>
    </location>
    <ligand>
        <name>[2Fe-2S] cluster</name>
        <dbReference type="ChEBI" id="CHEBI:190135"/>
    </ligand>
</feature>
<feature type="binding site" evidence="1">
    <location>
        <position position="225"/>
    </location>
    <ligand>
        <name>[2Fe-2S] cluster</name>
        <dbReference type="ChEBI" id="CHEBI:190135"/>
    </ligand>
</feature>
<feature type="binding site" evidence="1">
    <location>
        <position position="228"/>
    </location>
    <ligand>
        <name>[2Fe-2S] cluster</name>
        <dbReference type="ChEBI" id="CHEBI:190135"/>
    </ligand>
</feature>
<feature type="binding site" evidence="1">
    <location>
        <position position="243"/>
    </location>
    <ligand>
        <name>[2Fe-2S] cluster</name>
        <dbReference type="ChEBI" id="CHEBI:190135"/>
    </ligand>
</feature>